<organismHost>
    <name type="scientific">Zygaenidae</name>
    <name type="common">burnets</name>
    <dbReference type="NCBI Taxonomy" id="115354"/>
</organismHost>
<accession>Q9JAF2</accession>
<sequence length="248" mass="29362">MGYNKSLRYSRHEGTTCVIDNHHLKSLGSVLHDVRRKKDRIREAEYEPIIDLADQYMVTEDPFRGPGKNVRITLFKEIRRVQPDTMKLVCNWSGKEFLRETWTRFISEEFPITTDQEIMDLWFELQLRPMHPNRCYKFTMQYALCTHPDYIAHDVIRQQDPYFVGPNNIERINLTKKGFAFPLTCLQSVYNDNFEGFFEDVLWPYFHRPLVYVGTTSGEIEEIMIEVSLLFKIKEFAPDVPLFTGPAY</sequence>
<keyword id="KW-0842">Viral occlusion body</keyword>
<dbReference type="EMBL" id="AF142425">
    <property type="protein sequence ID" value="AAF66610.1"/>
    <property type="molecule type" value="Genomic_DNA"/>
</dbReference>
<dbReference type="RefSeq" id="YP_009506066.1">
    <property type="nucleotide sequence ID" value="NC_038372.1"/>
</dbReference>
<dbReference type="SMR" id="Q9JAF2"/>
<dbReference type="GeneID" id="37616871"/>
<dbReference type="OrthoDB" id="6325at10239"/>
<dbReference type="Proteomes" id="UP000243411">
    <property type="component" value="Genome"/>
</dbReference>
<dbReference type="GO" id="GO:0039679">
    <property type="term" value="C:viral occlusion body"/>
    <property type="evidence" value="ECO:0007669"/>
    <property type="project" value="UniProtKB-KW"/>
</dbReference>
<dbReference type="GO" id="GO:0005198">
    <property type="term" value="F:structural molecule activity"/>
    <property type="evidence" value="ECO:0007669"/>
    <property type="project" value="InterPro"/>
</dbReference>
<dbReference type="InterPro" id="IPR001746">
    <property type="entry name" value="Polyhedrin"/>
</dbReference>
<dbReference type="Pfam" id="PF00738">
    <property type="entry name" value="Polyhedrin"/>
    <property type="match status" value="1"/>
</dbReference>
<name>GRAN_GVHB</name>
<comment type="function">
    <text>Component of the virus occlusion bodies, which are large proteinaceous structures, that protect the virus from the outside environment for extended periods until they are ingested by insect larvae.</text>
</comment>
<comment type="similarity">
    <text evidence="1">Belongs to the polyhedrin family.</text>
</comment>
<proteinExistence type="inferred from homology"/>
<organism>
    <name type="scientific">Harrisina brillians granulovirus</name>
    <name type="common">HbGV</name>
    <dbReference type="NCBI Taxonomy" id="115813"/>
    <lineage>
        <taxon>Viruses</taxon>
        <taxon>Viruses incertae sedis</taxon>
        <taxon>Naldaviricetes</taxon>
        <taxon>Lefavirales</taxon>
        <taxon>Baculoviridae</taxon>
        <taxon>Betabaculovirus</taxon>
        <taxon>Betabaculovirus habrilliantis</taxon>
    </lineage>
</organism>
<reference key="1">
    <citation type="journal article" date="2000" name="Arch. Virol.">
        <title>Molecular characterization and phylogenetic analysis of the Harrisina brillians granulovirus granulin gene.</title>
        <authorList>
            <person name="Bideshi D.K."/>
            <person name="Bigot Y."/>
            <person name="Federici B.A."/>
        </authorList>
    </citation>
    <scope>NUCLEOTIDE SEQUENCE [GENOMIC DNA]</scope>
</reference>
<feature type="chain" id="PRO_0000217265" description="Granulin">
    <location>
        <begin position="1"/>
        <end position="248"/>
    </location>
</feature>
<evidence type="ECO:0000305" key="1"/>
<protein>
    <recommendedName>
        <fullName>Granulin</fullName>
    </recommendedName>
    <alternativeName>
        <fullName>Matrix protein</fullName>
    </alternativeName>
</protein>